<name>MOBA_BRUMB</name>
<protein>
    <recommendedName>
        <fullName evidence="1">Molybdenum cofactor guanylyltransferase</fullName>
        <shortName evidence="1">MoCo guanylyltransferase</shortName>
        <ecNumber evidence="1">2.7.7.77</ecNumber>
    </recommendedName>
    <alternativeName>
        <fullName evidence="1">GTP:molybdopterin guanylyltransferase</fullName>
    </alternativeName>
    <alternativeName>
        <fullName evidence="1">Mo-MPT guanylyltransferase</fullName>
    </alternativeName>
    <alternativeName>
        <fullName evidence="1">Molybdopterin guanylyltransferase</fullName>
    </alternativeName>
    <alternativeName>
        <fullName evidence="1">Molybdopterin-guanine dinucleotide synthase</fullName>
        <shortName evidence="1">MGD synthase</shortName>
    </alternativeName>
</protein>
<proteinExistence type="inferred from homology"/>
<accession>C0RIT3</accession>
<comment type="function">
    <text evidence="1">Transfers a GMP moiety from GTP to Mo-molybdopterin (Mo-MPT) cofactor (Moco or molybdenum cofactor) to form Mo-molybdopterin guanine dinucleotide (Mo-MGD) cofactor.</text>
</comment>
<comment type="catalytic activity">
    <reaction evidence="1">
        <text>Mo-molybdopterin + GTP + H(+) = Mo-molybdopterin guanine dinucleotide + diphosphate</text>
        <dbReference type="Rhea" id="RHEA:34243"/>
        <dbReference type="ChEBI" id="CHEBI:15378"/>
        <dbReference type="ChEBI" id="CHEBI:33019"/>
        <dbReference type="ChEBI" id="CHEBI:37565"/>
        <dbReference type="ChEBI" id="CHEBI:71302"/>
        <dbReference type="ChEBI" id="CHEBI:71310"/>
        <dbReference type="EC" id="2.7.7.77"/>
    </reaction>
</comment>
<comment type="cofactor">
    <cofactor evidence="1">
        <name>Mg(2+)</name>
        <dbReference type="ChEBI" id="CHEBI:18420"/>
    </cofactor>
</comment>
<comment type="subunit">
    <text evidence="1">Monomer.</text>
</comment>
<comment type="subcellular location">
    <subcellularLocation>
        <location evidence="1">Cytoplasm</location>
    </subcellularLocation>
</comment>
<comment type="domain">
    <text evidence="1">The N-terminal domain determines nucleotide recognition and specific binding, while the C-terminal domain determines the specific binding to the target protein.</text>
</comment>
<comment type="similarity">
    <text evidence="1">Belongs to the MobA family.</text>
</comment>
<gene>
    <name evidence="1" type="primary">mobA</name>
    <name type="ordered locus">BMEA_A0991</name>
</gene>
<sequence length="221" mass="23761">MRAGQPKITGAKITGAIIAGGQSSRMQAGGVSGDKFLQPLGSAPVIAHVIARLQPQVDTLFINSKGDLSRFAAFGLPAVKDIAMNHGGPLVGLLTCLAHASPCRLLLTSAADTPFLPCDLASNLIRKQAETGARIILACSNERVHPIVGLWHTDLVPDLEKWLQYAEKASIFWFAKHIGFEVVNIPLAHAPRLAESYDPFFNINLPDDLLKAREINEALQA</sequence>
<evidence type="ECO:0000255" key="1">
    <source>
        <dbReference type="HAMAP-Rule" id="MF_00316"/>
    </source>
</evidence>
<organism>
    <name type="scientific">Brucella melitensis biotype 2 (strain ATCC 23457)</name>
    <dbReference type="NCBI Taxonomy" id="546272"/>
    <lineage>
        <taxon>Bacteria</taxon>
        <taxon>Pseudomonadati</taxon>
        <taxon>Pseudomonadota</taxon>
        <taxon>Alphaproteobacteria</taxon>
        <taxon>Hyphomicrobiales</taxon>
        <taxon>Brucellaceae</taxon>
        <taxon>Brucella/Ochrobactrum group</taxon>
        <taxon>Brucella</taxon>
    </lineage>
</organism>
<reference key="1">
    <citation type="submission" date="2009-03" db="EMBL/GenBank/DDBJ databases">
        <title>Brucella melitensis ATCC 23457 whole genome shotgun sequencing project.</title>
        <authorList>
            <person name="Setubal J.C."/>
            <person name="Boyle S."/>
            <person name="Crasta O.R."/>
            <person name="Gillespie J.J."/>
            <person name="Kenyon R.W."/>
            <person name="Lu J."/>
            <person name="Mane S."/>
            <person name="Nagrani S."/>
            <person name="Shallom J.M."/>
            <person name="Shallom S."/>
            <person name="Shukla M."/>
            <person name="Snyder E.E."/>
            <person name="Sobral B.W."/>
            <person name="Wattam A.R."/>
            <person name="Will R."/>
            <person name="Williams K."/>
            <person name="Yoo H."/>
            <person name="Munk C."/>
            <person name="Tapia R."/>
            <person name="Han C."/>
            <person name="Detter J.C."/>
            <person name="Bruce D."/>
            <person name="Brettin T.S."/>
        </authorList>
    </citation>
    <scope>NUCLEOTIDE SEQUENCE [LARGE SCALE GENOMIC DNA]</scope>
    <source>
        <strain>ATCC 23457</strain>
    </source>
</reference>
<feature type="chain" id="PRO_1000132956" description="Molybdenum cofactor guanylyltransferase">
    <location>
        <begin position="1"/>
        <end position="221"/>
    </location>
</feature>
<feature type="binding site" evidence="1">
    <location>
        <begin position="18"/>
        <end position="20"/>
    </location>
    <ligand>
        <name>GTP</name>
        <dbReference type="ChEBI" id="CHEBI:37565"/>
    </ligand>
</feature>
<feature type="binding site" evidence="1">
    <location>
        <position position="35"/>
    </location>
    <ligand>
        <name>GTP</name>
        <dbReference type="ChEBI" id="CHEBI:37565"/>
    </ligand>
</feature>
<feature type="binding site" evidence="1">
    <location>
        <position position="63"/>
    </location>
    <ligand>
        <name>GTP</name>
        <dbReference type="ChEBI" id="CHEBI:37565"/>
    </ligand>
</feature>
<feature type="binding site" evidence="1">
    <location>
        <position position="81"/>
    </location>
    <ligand>
        <name>GTP</name>
        <dbReference type="ChEBI" id="CHEBI:37565"/>
    </ligand>
</feature>
<feature type="binding site" evidence="1">
    <location>
        <position position="112"/>
    </location>
    <ligand>
        <name>GTP</name>
        <dbReference type="ChEBI" id="CHEBI:37565"/>
    </ligand>
</feature>
<feature type="binding site" evidence="1">
    <location>
        <position position="112"/>
    </location>
    <ligand>
        <name>Mg(2+)</name>
        <dbReference type="ChEBI" id="CHEBI:18420"/>
    </ligand>
</feature>
<dbReference type="EC" id="2.7.7.77" evidence="1"/>
<dbReference type="EMBL" id="CP001488">
    <property type="protein sequence ID" value="ACO00741.1"/>
    <property type="molecule type" value="Genomic_DNA"/>
</dbReference>
<dbReference type="RefSeq" id="WP_004683729.1">
    <property type="nucleotide sequence ID" value="NC_012441.1"/>
</dbReference>
<dbReference type="SMR" id="C0RIT3"/>
<dbReference type="KEGG" id="bmi:BMEA_A0991"/>
<dbReference type="HOGENOM" id="CLU_055597_5_0_5"/>
<dbReference type="Proteomes" id="UP000001748">
    <property type="component" value="Chromosome I"/>
</dbReference>
<dbReference type="GO" id="GO:0005737">
    <property type="term" value="C:cytoplasm"/>
    <property type="evidence" value="ECO:0007669"/>
    <property type="project" value="UniProtKB-SubCell"/>
</dbReference>
<dbReference type="GO" id="GO:0005525">
    <property type="term" value="F:GTP binding"/>
    <property type="evidence" value="ECO:0007669"/>
    <property type="project" value="UniProtKB-UniRule"/>
</dbReference>
<dbReference type="GO" id="GO:0046872">
    <property type="term" value="F:metal ion binding"/>
    <property type="evidence" value="ECO:0007669"/>
    <property type="project" value="UniProtKB-KW"/>
</dbReference>
<dbReference type="GO" id="GO:0061603">
    <property type="term" value="F:molybdenum cofactor guanylyltransferase activity"/>
    <property type="evidence" value="ECO:0007669"/>
    <property type="project" value="UniProtKB-EC"/>
</dbReference>
<dbReference type="GO" id="GO:1902758">
    <property type="term" value="P:bis(molybdopterin guanine dinucleotide)molybdenum biosynthetic process"/>
    <property type="evidence" value="ECO:0007669"/>
    <property type="project" value="TreeGrafter"/>
</dbReference>
<dbReference type="CDD" id="cd02503">
    <property type="entry name" value="MobA"/>
    <property type="match status" value="1"/>
</dbReference>
<dbReference type="Gene3D" id="3.90.550.10">
    <property type="entry name" value="Spore Coat Polysaccharide Biosynthesis Protein SpsA, Chain A"/>
    <property type="match status" value="1"/>
</dbReference>
<dbReference type="HAMAP" id="MF_00316">
    <property type="entry name" value="MobA"/>
    <property type="match status" value="1"/>
</dbReference>
<dbReference type="InterPro" id="IPR025877">
    <property type="entry name" value="MobA-like_NTP_Trfase"/>
</dbReference>
<dbReference type="InterPro" id="IPR013482">
    <property type="entry name" value="Molybde_CF_guanTrfase"/>
</dbReference>
<dbReference type="InterPro" id="IPR029044">
    <property type="entry name" value="Nucleotide-diphossugar_trans"/>
</dbReference>
<dbReference type="PANTHER" id="PTHR19136">
    <property type="entry name" value="MOLYBDENUM COFACTOR GUANYLYLTRANSFERASE"/>
    <property type="match status" value="1"/>
</dbReference>
<dbReference type="PANTHER" id="PTHR19136:SF81">
    <property type="entry name" value="MOLYBDENUM COFACTOR GUANYLYLTRANSFERASE"/>
    <property type="match status" value="1"/>
</dbReference>
<dbReference type="Pfam" id="PF12804">
    <property type="entry name" value="NTP_transf_3"/>
    <property type="match status" value="1"/>
</dbReference>
<dbReference type="SUPFAM" id="SSF53448">
    <property type="entry name" value="Nucleotide-diphospho-sugar transferases"/>
    <property type="match status" value="1"/>
</dbReference>
<keyword id="KW-0963">Cytoplasm</keyword>
<keyword id="KW-0342">GTP-binding</keyword>
<keyword id="KW-0460">Magnesium</keyword>
<keyword id="KW-0479">Metal-binding</keyword>
<keyword id="KW-0501">Molybdenum cofactor biosynthesis</keyword>
<keyword id="KW-0547">Nucleotide-binding</keyword>
<keyword id="KW-0808">Transferase</keyword>